<comment type="function">
    <text evidence="1">RNA polymerase that catalyzes the synthesis of short RNA molecules used as primers for DNA polymerase during DNA replication.</text>
</comment>
<comment type="catalytic activity">
    <reaction evidence="1">
        <text>ssDNA + n NTP = ssDNA/pppN(pN)n-1 hybrid + (n-1) diphosphate.</text>
        <dbReference type="EC" id="2.7.7.101"/>
    </reaction>
</comment>
<comment type="cofactor">
    <cofactor evidence="1">
        <name>Zn(2+)</name>
        <dbReference type="ChEBI" id="CHEBI:29105"/>
    </cofactor>
    <text evidence="1">Binds 1 zinc ion per monomer.</text>
</comment>
<comment type="cofactor">
    <cofactor evidence="1">
        <name>Mg(2+)</name>
        <dbReference type="ChEBI" id="CHEBI:18420"/>
    </cofactor>
    <text evidence="1">Binds two Mg(2+) per subunit.</text>
</comment>
<comment type="subunit">
    <text evidence="1">Monomer. Interacts with DnaB.</text>
</comment>
<comment type="domain">
    <text evidence="1">Contains an N-terminal zinc-binding domain, a central core domain that contains the primase activity, and a C-terminal DnaB-binding domain.</text>
</comment>
<comment type="similarity">
    <text evidence="1">Belongs to the DnaG primase family.</text>
</comment>
<organism>
    <name type="scientific">Helicobacter pylori (strain J99 / ATCC 700824)</name>
    <name type="common">Campylobacter pylori J99</name>
    <dbReference type="NCBI Taxonomy" id="85963"/>
    <lineage>
        <taxon>Bacteria</taxon>
        <taxon>Pseudomonadati</taxon>
        <taxon>Campylobacterota</taxon>
        <taxon>Epsilonproteobacteria</taxon>
        <taxon>Campylobacterales</taxon>
        <taxon>Helicobacteraceae</taxon>
        <taxon>Helicobacter</taxon>
    </lineage>
</organism>
<accession>Q9ZN49</accession>
<gene>
    <name evidence="1" type="primary">dnaG</name>
    <name type="ordered locus">jhp_0010</name>
</gene>
<sequence length="559" mass="63816">MILKSSIDRLLQTIDIVEVISSYVDLRKSGSNYMACCPFHEERSASFSVNQVKGFYYCFGCGASGDSIKFVMAFEKLSFVEALEKLAHRFNIALEYDKGVYYDHKEDYHLLEMVSSLYQEELFNAPFFLNYLQKRGLSMESIKAFKLGLCTNKIDYGIENKGLNKDKLIELGVLGKSDKEDKTYLRFLDRIMFPIYSPSAQVVGFGGRTLKEKAAKYINSPQNKLFDKSSLLYGYHLAKEHIYKQKQVIVTEGYLDVILLHQAGFKNAIATLGTALTPSHLPLLKKGDPEILLSYDGDKAGRNAAYKASLMLAKEQRKGGVILFENNLDPADMIANHQIETLKNWLSRPIAFIEFVLRHMAGSYLLDDPLEKDKALKEMLGFLKNFSLLLQNEYKPLIATLLQAPLHVLGIREPVSFQPFYPKTEKPNRPQKFAHVSSMPSLEFLEKLVIRYLLEDRSLLDLAVGYIHSGVFLHKKQEFDALCQEKLDDPKLVALLLDANLPLKKGGFEKELRLLILRYFERQLKEIPKSPLSFSEKMIFLKRARQAIMKLKQGELVAI</sequence>
<reference key="1">
    <citation type="journal article" date="1999" name="Nature">
        <title>Genomic sequence comparison of two unrelated isolates of the human gastric pathogen Helicobacter pylori.</title>
        <authorList>
            <person name="Alm R.A."/>
            <person name="Ling L.-S.L."/>
            <person name="Moir D.T."/>
            <person name="King B.L."/>
            <person name="Brown E.D."/>
            <person name="Doig P.C."/>
            <person name="Smith D.R."/>
            <person name="Noonan B."/>
            <person name="Guild B.C."/>
            <person name="deJonge B.L."/>
            <person name="Carmel G."/>
            <person name="Tummino P.J."/>
            <person name="Caruso A."/>
            <person name="Uria-Nickelsen M."/>
            <person name="Mills D.M."/>
            <person name="Ives C."/>
            <person name="Gibson R."/>
            <person name="Merberg D."/>
            <person name="Mills S.D."/>
            <person name="Jiang Q."/>
            <person name="Taylor D.E."/>
            <person name="Vovis G.F."/>
            <person name="Trust T.J."/>
        </authorList>
    </citation>
    <scope>NUCLEOTIDE SEQUENCE [LARGE SCALE GENOMIC DNA]</scope>
    <source>
        <strain>J99 / ATCC 700824</strain>
    </source>
</reference>
<dbReference type="EC" id="2.7.7.101" evidence="1"/>
<dbReference type="EMBL" id="AE001439">
    <property type="protein sequence ID" value="AAD05592.1"/>
    <property type="molecule type" value="Genomic_DNA"/>
</dbReference>
<dbReference type="PIR" id="H71983">
    <property type="entry name" value="H71983"/>
</dbReference>
<dbReference type="RefSeq" id="WP_000601572.1">
    <property type="nucleotide sequence ID" value="NC_000921.1"/>
</dbReference>
<dbReference type="SMR" id="Q9ZN49"/>
<dbReference type="KEGG" id="hpj:jhp_0010"/>
<dbReference type="PATRIC" id="fig|85963.30.peg.1033"/>
<dbReference type="eggNOG" id="COG0358">
    <property type="taxonomic scope" value="Bacteria"/>
</dbReference>
<dbReference type="Proteomes" id="UP000000804">
    <property type="component" value="Chromosome"/>
</dbReference>
<dbReference type="GO" id="GO:0005737">
    <property type="term" value="C:cytoplasm"/>
    <property type="evidence" value="ECO:0007669"/>
    <property type="project" value="TreeGrafter"/>
</dbReference>
<dbReference type="GO" id="GO:0000428">
    <property type="term" value="C:DNA-directed RNA polymerase complex"/>
    <property type="evidence" value="ECO:0007669"/>
    <property type="project" value="UniProtKB-KW"/>
</dbReference>
<dbReference type="GO" id="GO:1990077">
    <property type="term" value="C:primosome complex"/>
    <property type="evidence" value="ECO:0007669"/>
    <property type="project" value="UniProtKB-KW"/>
</dbReference>
<dbReference type="GO" id="GO:0003677">
    <property type="term" value="F:DNA binding"/>
    <property type="evidence" value="ECO:0007669"/>
    <property type="project" value="UniProtKB-KW"/>
</dbReference>
<dbReference type="GO" id="GO:0003899">
    <property type="term" value="F:DNA-directed RNA polymerase activity"/>
    <property type="evidence" value="ECO:0007669"/>
    <property type="project" value="InterPro"/>
</dbReference>
<dbReference type="GO" id="GO:0008270">
    <property type="term" value="F:zinc ion binding"/>
    <property type="evidence" value="ECO:0007669"/>
    <property type="project" value="UniProtKB-UniRule"/>
</dbReference>
<dbReference type="GO" id="GO:0006269">
    <property type="term" value="P:DNA replication, synthesis of primer"/>
    <property type="evidence" value="ECO:0007669"/>
    <property type="project" value="UniProtKB-UniRule"/>
</dbReference>
<dbReference type="CDD" id="cd03364">
    <property type="entry name" value="TOPRIM_DnaG_primases"/>
    <property type="match status" value="1"/>
</dbReference>
<dbReference type="FunFam" id="3.90.580.10:FF:000001">
    <property type="entry name" value="DNA primase"/>
    <property type="match status" value="1"/>
</dbReference>
<dbReference type="Gene3D" id="3.40.1360.10">
    <property type="match status" value="1"/>
</dbReference>
<dbReference type="Gene3D" id="3.90.980.10">
    <property type="entry name" value="DNA primase, catalytic core, N-terminal domain"/>
    <property type="match status" value="1"/>
</dbReference>
<dbReference type="Gene3D" id="1.10.860.10">
    <property type="entry name" value="DNAb Helicase, Chain A"/>
    <property type="match status" value="1"/>
</dbReference>
<dbReference type="Gene3D" id="3.90.580.10">
    <property type="entry name" value="Zinc finger, CHC2-type domain"/>
    <property type="match status" value="1"/>
</dbReference>
<dbReference type="HAMAP" id="MF_00974">
    <property type="entry name" value="DNA_primase_DnaG"/>
    <property type="match status" value="1"/>
</dbReference>
<dbReference type="InterPro" id="IPR016136">
    <property type="entry name" value="DNA_helicase_N/primase_C"/>
</dbReference>
<dbReference type="InterPro" id="IPR037068">
    <property type="entry name" value="DNA_primase_core_N_sf"/>
</dbReference>
<dbReference type="InterPro" id="IPR006295">
    <property type="entry name" value="DNA_primase_DnaG"/>
</dbReference>
<dbReference type="InterPro" id="IPR036977">
    <property type="entry name" value="DNA_primase_Znf_CHC2"/>
</dbReference>
<dbReference type="InterPro" id="IPR030846">
    <property type="entry name" value="DnaG_bac"/>
</dbReference>
<dbReference type="InterPro" id="IPR031988">
    <property type="entry name" value="DnaG_HBD"/>
</dbReference>
<dbReference type="InterPro" id="IPR013264">
    <property type="entry name" value="DNAG_N"/>
</dbReference>
<dbReference type="InterPro" id="IPR050219">
    <property type="entry name" value="DnaG_primase"/>
</dbReference>
<dbReference type="InterPro" id="IPR034151">
    <property type="entry name" value="TOPRIM_DnaG_bac"/>
</dbReference>
<dbReference type="InterPro" id="IPR006171">
    <property type="entry name" value="TOPRIM_dom"/>
</dbReference>
<dbReference type="InterPro" id="IPR002694">
    <property type="entry name" value="Znf_CHC2"/>
</dbReference>
<dbReference type="NCBIfam" id="TIGR01391">
    <property type="entry name" value="dnaG"/>
    <property type="match status" value="1"/>
</dbReference>
<dbReference type="PANTHER" id="PTHR30313">
    <property type="entry name" value="DNA PRIMASE"/>
    <property type="match status" value="1"/>
</dbReference>
<dbReference type="PANTHER" id="PTHR30313:SF2">
    <property type="entry name" value="DNA PRIMASE"/>
    <property type="match status" value="1"/>
</dbReference>
<dbReference type="Pfam" id="PF08275">
    <property type="entry name" value="DNAG_N"/>
    <property type="match status" value="1"/>
</dbReference>
<dbReference type="Pfam" id="PF16730">
    <property type="entry name" value="DnaGprimase_HBD"/>
    <property type="match status" value="1"/>
</dbReference>
<dbReference type="Pfam" id="PF13155">
    <property type="entry name" value="Toprim_2"/>
    <property type="match status" value="1"/>
</dbReference>
<dbReference type="Pfam" id="PF01807">
    <property type="entry name" value="Zn_ribbon_DnaG"/>
    <property type="match status" value="1"/>
</dbReference>
<dbReference type="SMART" id="SM00493">
    <property type="entry name" value="TOPRIM"/>
    <property type="match status" value="1"/>
</dbReference>
<dbReference type="SMART" id="SM00400">
    <property type="entry name" value="ZnF_CHCC"/>
    <property type="match status" value="1"/>
</dbReference>
<dbReference type="SUPFAM" id="SSF56731">
    <property type="entry name" value="DNA primase core"/>
    <property type="match status" value="1"/>
</dbReference>
<dbReference type="SUPFAM" id="SSF57783">
    <property type="entry name" value="Zinc beta-ribbon"/>
    <property type="match status" value="1"/>
</dbReference>
<dbReference type="PROSITE" id="PS50880">
    <property type="entry name" value="TOPRIM"/>
    <property type="match status" value="1"/>
</dbReference>
<keyword id="KW-0235">DNA replication</keyword>
<keyword id="KW-0238">DNA-binding</keyword>
<keyword id="KW-0240">DNA-directed RNA polymerase</keyword>
<keyword id="KW-0460">Magnesium</keyword>
<keyword id="KW-0479">Metal-binding</keyword>
<keyword id="KW-0548">Nucleotidyltransferase</keyword>
<keyword id="KW-0639">Primosome</keyword>
<keyword id="KW-0804">Transcription</keyword>
<keyword id="KW-0808">Transferase</keyword>
<keyword id="KW-0862">Zinc</keyword>
<keyword id="KW-0863">Zinc-finger</keyword>
<proteinExistence type="inferred from homology"/>
<feature type="chain" id="PRO_0000180496" description="DNA primase">
    <location>
        <begin position="1"/>
        <end position="559"/>
    </location>
</feature>
<feature type="domain" description="Toprim" evidence="1">
    <location>
        <begin position="246"/>
        <end position="327"/>
    </location>
</feature>
<feature type="zinc finger region" description="CHC2-type" evidence="1">
    <location>
        <begin position="37"/>
        <end position="61"/>
    </location>
</feature>
<feature type="binding site" evidence="1">
    <location>
        <position position="252"/>
    </location>
    <ligand>
        <name>Mg(2+)</name>
        <dbReference type="ChEBI" id="CHEBI:18420"/>
        <label>1</label>
        <note>catalytic</note>
    </ligand>
</feature>
<feature type="binding site" evidence="1">
    <location>
        <position position="296"/>
    </location>
    <ligand>
        <name>Mg(2+)</name>
        <dbReference type="ChEBI" id="CHEBI:18420"/>
        <label>1</label>
        <note>catalytic</note>
    </ligand>
</feature>
<feature type="binding site" evidence="1">
    <location>
        <position position="296"/>
    </location>
    <ligand>
        <name>Mg(2+)</name>
        <dbReference type="ChEBI" id="CHEBI:18420"/>
        <label>2</label>
    </ligand>
</feature>
<feature type="binding site" evidence="1">
    <location>
        <position position="298"/>
    </location>
    <ligand>
        <name>Mg(2+)</name>
        <dbReference type="ChEBI" id="CHEBI:18420"/>
        <label>2</label>
    </ligand>
</feature>
<protein>
    <recommendedName>
        <fullName evidence="1">DNA primase</fullName>
        <ecNumber evidence="1">2.7.7.101</ecNumber>
    </recommendedName>
</protein>
<evidence type="ECO:0000255" key="1">
    <source>
        <dbReference type="HAMAP-Rule" id="MF_00974"/>
    </source>
</evidence>
<name>DNAG_HELPJ</name>